<evidence type="ECO:0000255" key="1"/>
<evidence type="ECO:0000305" key="2"/>
<accession>P54909</accession>
<gene>
    <name type="primary">trbD</name>
</gene>
<keyword id="KW-1003">Cell membrane</keyword>
<keyword id="KW-0184">Conjugation</keyword>
<keyword id="KW-0472">Membrane</keyword>
<keyword id="KW-0614">Plasmid</keyword>
<keyword id="KW-0812">Transmembrane</keyword>
<keyword id="KW-1133">Transmembrane helix</keyword>
<comment type="subcellular location">
    <subcellularLocation>
        <location evidence="2">Cell membrane</location>
        <topology evidence="2">Single-pass membrane protein</topology>
    </subcellularLocation>
</comment>
<comment type="similarity">
    <text evidence="2">Belongs to the TrbD family.</text>
</comment>
<sequence length="99" mass="11248">MAESGSALVRSRVHRALSRPNLLMGADRELVLLTALAAIILIFVVLTWYAALFGIAIWLIVVGALRTMAKADPLMRRVYIRHISYKNFYRATSSPWRKF</sequence>
<dbReference type="EMBL" id="AF242881">
    <property type="protein sequence ID" value="AAB95096.1"/>
    <property type="molecule type" value="Genomic_DNA"/>
</dbReference>
<dbReference type="RefSeq" id="NP_059758.1">
    <property type="nucleotide sequence ID" value="NC_002377.1"/>
</dbReference>
<dbReference type="RefSeq" id="WP_010892446.1">
    <property type="nucleotide sequence ID" value="NZ_QSNU01000012.1"/>
</dbReference>
<dbReference type="OrthoDB" id="7063374at2"/>
<dbReference type="GO" id="GO:0005886">
    <property type="term" value="C:plasma membrane"/>
    <property type="evidence" value="ECO:0007669"/>
    <property type="project" value="UniProtKB-SubCell"/>
</dbReference>
<dbReference type="InterPro" id="IPR016704">
    <property type="entry name" value="Conjugal_tfr_TrbD"/>
</dbReference>
<dbReference type="InterPro" id="IPR007792">
    <property type="entry name" value="T4SS_VirB3/TrbD/AvhB"/>
</dbReference>
<dbReference type="NCBIfam" id="NF010395">
    <property type="entry name" value="PRK13823.1"/>
    <property type="match status" value="1"/>
</dbReference>
<dbReference type="Pfam" id="PF05101">
    <property type="entry name" value="VirB3"/>
    <property type="match status" value="1"/>
</dbReference>
<dbReference type="PIRSF" id="PIRSF017854">
    <property type="entry name" value="T4SS_TrbD"/>
    <property type="match status" value="1"/>
</dbReference>
<reference key="1">
    <citation type="journal article" date="1996" name="J. Bacteriol.">
        <title>The conjugal transfer system of Agrobacterium tumefaciens octopine-type Ti plasmids is closely related to the transfer system of an IncP plasmid and distantly related to Ti plasmid vir genes.</title>
        <authorList>
            <person name="Alt-Morbe J."/>
            <person name="Stryker J.L."/>
            <person name="Fuqua C."/>
            <person name="Li P.L."/>
            <person name="Farrand S.K."/>
            <person name="Winans S.C."/>
        </authorList>
    </citation>
    <scope>NUCLEOTIDE SEQUENCE [GENOMIC DNA]</scope>
</reference>
<organism>
    <name type="scientific">Rhizobium radiobacter</name>
    <name type="common">Agrobacterium tumefaciens</name>
    <name type="synonym">Agrobacterium radiobacter</name>
    <dbReference type="NCBI Taxonomy" id="358"/>
    <lineage>
        <taxon>Bacteria</taxon>
        <taxon>Pseudomonadati</taxon>
        <taxon>Pseudomonadota</taxon>
        <taxon>Alphaproteobacteria</taxon>
        <taxon>Hyphomicrobiales</taxon>
        <taxon>Rhizobiaceae</taxon>
        <taxon>Rhizobium/Agrobacterium group</taxon>
        <taxon>Agrobacterium</taxon>
        <taxon>Agrobacterium tumefaciens complex</taxon>
    </lineage>
</organism>
<feature type="chain" id="PRO_0000065611" description="Conjugal transfer protein TrbD">
    <location>
        <begin position="1"/>
        <end position="99"/>
    </location>
</feature>
<feature type="transmembrane region" description="Helical" evidence="1">
    <location>
        <begin position="40"/>
        <end position="60"/>
    </location>
</feature>
<protein>
    <recommendedName>
        <fullName>Conjugal transfer protein TrbD</fullName>
    </recommendedName>
</protein>
<proteinExistence type="inferred from homology"/>
<geneLocation type="plasmid">
    <name>pTiA6NC</name>
</geneLocation>
<name>TRBD_RHIRD</name>